<name>NADC_HELPY</name>
<reference key="1">
    <citation type="journal article" date="1997" name="Nature">
        <title>The complete genome sequence of the gastric pathogen Helicobacter pylori.</title>
        <authorList>
            <person name="Tomb J.-F."/>
            <person name="White O."/>
            <person name="Kerlavage A.R."/>
            <person name="Clayton R.A."/>
            <person name="Sutton G.G."/>
            <person name="Fleischmann R.D."/>
            <person name="Ketchum K.A."/>
            <person name="Klenk H.-P."/>
            <person name="Gill S.R."/>
            <person name="Dougherty B.A."/>
            <person name="Nelson K.E."/>
            <person name="Quackenbush J."/>
            <person name="Zhou L."/>
            <person name="Kirkness E.F."/>
            <person name="Peterson S.N."/>
            <person name="Loftus B.J."/>
            <person name="Richardson D.L."/>
            <person name="Dodson R.J."/>
            <person name="Khalak H.G."/>
            <person name="Glodek A."/>
            <person name="McKenney K."/>
            <person name="FitzGerald L.M."/>
            <person name="Lee N."/>
            <person name="Adams M.D."/>
            <person name="Hickey E.K."/>
            <person name="Berg D.E."/>
            <person name="Gocayne J.D."/>
            <person name="Utterback T.R."/>
            <person name="Peterson J.D."/>
            <person name="Kelley J.M."/>
            <person name="Cotton M.D."/>
            <person name="Weidman J.F."/>
            <person name="Fujii C."/>
            <person name="Bowman C."/>
            <person name="Watthey L."/>
            <person name="Wallin E."/>
            <person name="Hayes W.S."/>
            <person name="Borodovsky M."/>
            <person name="Karp P.D."/>
            <person name="Smith H.O."/>
            <person name="Fraser C.M."/>
            <person name="Venter J.C."/>
        </authorList>
    </citation>
    <scope>NUCLEOTIDE SEQUENCE [LARGE SCALE GENOMIC DNA]</scope>
    <source>
        <strain>ATCC 700392 / 26695</strain>
    </source>
</reference>
<reference key="2">
    <citation type="journal article" date="2006" name="Proteins">
        <title>Crystal structure of quinolinic acid phosphoribosyltransferase from Helicobacter pylori.</title>
        <authorList>
            <person name="Kim M.-K."/>
            <person name="Im Y.J."/>
            <person name="Lee J.H."/>
            <person name="Eom S.H."/>
        </authorList>
    </citation>
    <scope>X-RAY CRYSTALLOGRAPHY (2.30 ANGSTROMS) IN COMPLEX WITH SUBSTRATE</scope>
    <scope>SUBUNIT</scope>
</reference>
<dbReference type="EC" id="2.4.2.19"/>
<dbReference type="EMBL" id="AE000511">
    <property type="protein sequence ID" value="AAD08397.1"/>
    <property type="molecule type" value="Genomic_DNA"/>
</dbReference>
<dbReference type="PIR" id="C64689">
    <property type="entry name" value="C64689"/>
</dbReference>
<dbReference type="RefSeq" id="NP_208147.1">
    <property type="nucleotide sequence ID" value="NC_000915.1"/>
</dbReference>
<dbReference type="RefSeq" id="WP_000405980.1">
    <property type="nucleotide sequence ID" value="NC_018939.1"/>
</dbReference>
<dbReference type="PDB" id="2B7N">
    <property type="method" value="X-ray"/>
    <property type="resolution" value="2.30 A"/>
    <property type="chains" value="A/B/C=1-273"/>
</dbReference>
<dbReference type="PDB" id="2B7P">
    <property type="method" value="X-ray"/>
    <property type="resolution" value="2.51 A"/>
    <property type="chains" value="A/B/C=1-273"/>
</dbReference>
<dbReference type="PDB" id="2B7Q">
    <property type="method" value="X-ray"/>
    <property type="resolution" value="3.31 A"/>
    <property type="chains" value="A/B/C=1-273"/>
</dbReference>
<dbReference type="PDBsum" id="2B7N"/>
<dbReference type="PDBsum" id="2B7P"/>
<dbReference type="PDBsum" id="2B7Q"/>
<dbReference type="SMR" id="O25909"/>
<dbReference type="DIP" id="DIP-3329N"/>
<dbReference type="FunCoup" id="O25909">
    <property type="interactions" value="343"/>
</dbReference>
<dbReference type="IntAct" id="O25909">
    <property type="interactions" value="3"/>
</dbReference>
<dbReference type="MINT" id="O25909"/>
<dbReference type="STRING" id="85962.HP_1355"/>
<dbReference type="PaxDb" id="85962-C694_06995"/>
<dbReference type="EnsemblBacteria" id="AAD08397">
    <property type="protein sequence ID" value="AAD08397"/>
    <property type="gene ID" value="HP_1355"/>
</dbReference>
<dbReference type="KEGG" id="heo:C694_06995"/>
<dbReference type="KEGG" id="hpy:HP_1355"/>
<dbReference type="PATRIC" id="fig|85962.47.peg.1451"/>
<dbReference type="eggNOG" id="COG0157">
    <property type="taxonomic scope" value="Bacteria"/>
</dbReference>
<dbReference type="InParanoid" id="O25909"/>
<dbReference type="OrthoDB" id="9782546at2"/>
<dbReference type="PhylomeDB" id="O25909"/>
<dbReference type="BRENDA" id="2.4.2.19">
    <property type="organism ID" value="2604"/>
</dbReference>
<dbReference type="UniPathway" id="UPA00253">
    <property type="reaction ID" value="UER00331"/>
</dbReference>
<dbReference type="EvolutionaryTrace" id="O25909"/>
<dbReference type="Proteomes" id="UP000000429">
    <property type="component" value="Chromosome"/>
</dbReference>
<dbReference type="GO" id="GO:0005737">
    <property type="term" value="C:cytoplasm"/>
    <property type="evidence" value="ECO:0000318"/>
    <property type="project" value="GO_Central"/>
</dbReference>
<dbReference type="GO" id="GO:0004514">
    <property type="term" value="F:nicotinate-nucleotide diphosphorylase (carboxylating) activity"/>
    <property type="evidence" value="ECO:0000318"/>
    <property type="project" value="GO_Central"/>
</dbReference>
<dbReference type="GO" id="GO:0009435">
    <property type="term" value="P:NAD biosynthetic process"/>
    <property type="evidence" value="ECO:0000318"/>
    <property type="project" value="GO_Central"/>
</dbReference>
<dbReference type="GO" id="GO:0034213">
    <property type="term" value="P:quinolinate catabolic process"/>
    <property type="evidence" value="ECO:0000318"/>
    <property type="project" value="GO_Central"/>
</dbReference>
<dbReference type="CDD" id="cd01572">
    <property type="entry name" value="QPRTase"/>
    <property type="match status" value="1"/>
</dbReference>
<dbReference type="FunFam" id="3.20.20.70:FF:000030">
    <property type="entry name" value="Nicotinate-nucleotide pyrophosphorylase, carboxylating"/>
    <property type="match status" value="1"/>
</dbReference>
<dbReference type="FunFam" id="3.90.1170.20:FF:000008">
    <property type="entry name" value="Probable nicotinate-nucleotide pyrophosphorylase [carboxylating]"/>
    <property type="match status" value="1"/>
</dbReference>
<dbReference type="Gene3D" id="3.20.20.70">
    <property type="entry name" value="Aldolase class I"/>
    <property type="match status" value="1"/>
</dbReference>
<dbReference type="Gene3D" id="3.90.1170.20">
    <property type="entry name" value="Quinolinate phosphoribosyl transferase, N-terminal domain"/>
    <property type="match status" value="1"/>
</dbReference>
<dbReference type="InterPro" id="IPR013785">
    <property type="entry name" value="Aldolase_TIM"/>
</dbReference>
<dbReference type="InterPro" id="IPR004393">
    <property type="entry name" value="NadC"/>
</dbReference>
<dbReference type="InterPro" id="IPR027277">
    <property type="entry name" value="NadC/ModD"/>
</dbReference>
<dbReference type="InterPro" id="IPR036068">
    <property type="entry name" value="Nicotinate_pribotase-like_C"/>
</dbReference>
<dbReference type="InterPro" id="IPR037128">
    <property type="entry name" value="Quinolinate_PRibosylTase_N_sf"/>
</dbReference>
<dbReference type="InterPro" id="IPR002638">
    <property type="entry name" value="Quinolinate_PRibosylTrfase_C"/>
</dbReference>
<dbReference type="InterPro" id="IPR022412">
    <property type="entry name" value="Quinolinate_PRibosylTrfase_N"/>
</dbReference>
<dbReference type="NCBIfam" id="TIGR00078">
    <property type="entry name" value="nadC"/>
    <property type="match status" value="1"/>
</dbReference>
<dbReference type="PANTHER" id="PTHR32179">
    <property type="entry name" value="NICOTINATE-NUCLEOTIDE PYROPHOSPHORYLASE [CARBOXYLATING]"/>
    <property type="match status" value="1"/>
</dbReference>
<dbReference type="PANTHER" id="PTHR32179:SF3">
    <property type="entry name" value="NICOTINATE-NUCLEOTIDE PYROPHOSPHORYLASE [CARBOXYLATING]"/>
    <property type="match status" value="1"/>
</dbReference>
<dbReference type="Pfam" id="PF01729">
    <property type="entry name" value="QRPTase_C"/>
    <property type="match status" value="1"/>
</dbReference>
<dbReference type="Pfam" id="PF02749">
    <property type="entry name" value="QRPTase_N"/>
    <property type="match status" value="1"/>
</dbReference>
<dbReference type="PIRSF" id="PIRSF006250">
    <property type="entry name" value="NadC_ModD"/>
    <property type="match status" value="1"/>
</dbReference>
<dbReference type="SUPFAM" id="SSF51690">
    <property type="entry name" value="Nicotinate/Quinolinate PRTase C-terminal domain-like"/>
    <property type="match status" value="1"/>
</dbReference>
<dbReference type="SUPFAM" id="SSF54675">
    <property type="entry name" value="Nicotinate/Quinolinate PRTase N-terminal domain-like"/>
    <property type="match status" value="1"/>
</dbReference>
<gene>
    <name type="primary">nadC</name>
    <name type="ordered locus">HP_1355</name>
</gene>
<feature type="chain" id="PRO_0000155943" description="Probable nicotinate-nucleotide pyrophosphorylase [carboxylating]">
    <location>
        <begin position="1"/>
        <end position="273"/>
    </location>
</feature>
<feature type="binding site" evidence="1">
    <location>
        <position position="91"/>
    </location>
    <ligand>
        <name>substrate</name>
    </ligand>
</feature>
<feature type="binding site">
    <location>
        <begin position="124"/>
        <end position="126"/>
    </location>
    <ligand>
        <name>substrate</name>
    </ligand>
</feature>
<feature type="binding site" evidence="2">
    <location>
        <position position="148"/>
    </location>
    <ligand>
        <name>substrate</name>
    </ligand>
</feature>
<feature type="binding site" evidence="2">
    <location>
        <position position="158"/>
    </location>
    <ligand>
        <name>substrate</name>
    </ligand>
</feature>
<feature type="binding site" evidence="2">
    <location>
        <position position="188"/>
    </location>
    <ligand>
        <name>substrate</name>
    </ligand>
</feature>
<feature type="binding site" evidence="2">
    <location>
        <position position="209"/>
    </location>
    <ligand>
        <name>substrate</name>
    </ligand>
</feature>
<feature type="binding site">
    <location>
        <begin position="235"/>
        <end position="237"/>
    </location>
    <ligand>
        <name>substrate</name>
    </ligand>
</feature>
<feature type="binding site">
    <location>
        <begin position="256"/>
        <end position="258"/>
    </location>
    <ligand>
        <name>substrate</name>
    </ligand>
</feature>
<feature type="helix" evidence="4">
    <location>
        <begin position="4"/>
        <end position="15"/>
    </location>
</feature>
<feature type="helix" evidence="4">
    <location>
        <begin position="21"/>
        <end position="24"/>
    </location>
</feature>
<feature type="strand" evidence="4">
    <location>
        <begin position="30"/>
        <end position="39"/>
    </location>
</feature>
<feature type="helix" evidence="4">
    <location>
        <begin position="46"/>
        <end position="55"/>
    </location>
</feature>
<feature type="strand" evidence="4">
    <location>
        <begin position="59"/>
        <end position="63"/>
    </location>
</feature>
<feature type="strand" evidence="4">
    <location>
        <begin position="75"/>
        <end position="82"/>
    </location>
</feature>
<feature type="helix" evidence="4">
    <location>
        <begin position="83"/>
        <end position="114"/>
    </location>
</feature>
<feature type="strand" evidence="4">
    <location>
        <begin position="117"/>
        <end position="122"/>
    </location>
</feature>
<feature type="helix" evidence="4">
    <location>
        <begin position="132"/>
        <end position="140"/>
    </location>
</feature>
<feature type="turn" evidence="4">
    <location>
        <begin position="141"/>
        <end position="143"/>
    </location>
</feature>
<feature type="turn" evidence="4">
    <location>
        <begin position="151"/>
        <end position="153"/>
    </location>
</feature>
<feature type="strand" evidence="4">
    <location>
        <begin position="155"/>
        <end position="157"/>
    </location>
</feature>
<feature type="helix" evidence="4">
    <location>
        <begin position="159"/>
        <end position="162"/>
    </location>
</feature>
<feature type="helix" evidence="4">
    <location>
        <begin position="168"/>
        <end position="175"/>
    </location>
</feature>
<feature type="helix" evidence="4">
    <location>
        <begin position="176"/>
        <end position="178"/>
    </location>
</feature>
<feature type="strand" evidence="4">
    <location>
        <begin position="185"/>
        <end position="191"/>
    </location>
</feature>
<feature type="helix" evidence="4">
    <location>
        <begin position="192"/>
        <end position="201"/>
    </location>
</feature>
<feature type="strand" evidence="4">
    <location>
        <begin position="204"/>
        <end position="209"/>
    </location>
</feature>
<feature type="helix" evidence="4">
    <location>
        <begin position="213"/>
        <end position="226"/>
    </location>
</feature>
<feature type="strand" evidence="4">
    <location>
        <begin position="231"/>
        <end position="237"/>
    </location>
</feature>
<feature type="turn" evidence="4">
    <location>
        <begin position="240"/>
        <end position="242"/>
    </location>
</feature>
<feature type="helix" evidence="4">
    <location>
        <begin position="243"/>
        <end position="247"/>
    </location>
</feature>
<feature type="turn" evidence="4">
    <location>
        <begin position="248"/>
        <end position="250"/>
    </location>
</feature>
<feature type="strand" evidence="4">
    <location>
        <begin position="252"/>
        <end position="255"/>
    </location>
</feature>
<feature type="helix" evidence="4">
    <location>
        <begin position="258"/>
        <end position="261"/>
    </location>
</feature>
<feature type="strand" evidence="4">
    <location>
        <begin position="268"/>
        <end position="271"/>
    </location>
</feature>
<evidence type="ECO:0000250" key="1"/>
<evidence type="ECO:0000269" key="2">
    <source>
    </source>
</evidence>
<evidence type="ECO:0000305" key="3"/>
<evidence type="ECO:0007829" key="4">
    <source>
        <dbReference type="PDB" id="2B7N"/>
    </source>
</evidence>
<keyword id="KW-0002">3D-structure</keyword>
<keyword id="KW-0328">Glycosyltransferase</keyword>
<keyword id="KW-0662">Pyridine nucleotide biosynthesis</keyword>
<keyword id="KW-1185">Reference proteome</keyword>
<keyword id="KW-0808">Transferase</keyword>
<organism>
    <name type="scientific">Helicobacter pylori (strain ATCC 700392 / 26695)</name>
    <name type="common">Campylobacter pylori</name>
    <dbReference type="NCBI Taxonomy" id="85962"/>
    <lineage>
        <taxon>Bacteria</taxon>
        <taxon>Pseudomonadati</taxon>
        <taxon>Campylobacterota</taxon>
        <taxon>Epsilonproteobacteria</taxon>
        <taxon>Campylobacterales</taxon>
        <taxon>Helicobacteraceae</taxon>
        <taxon>Helicobacter</taxon>
    </lineage>
</organism>
<comment type="function">
    <text evidence="1">Involved in the catabolism of quinolinic acid (QA).</text>
</comment>
<comment type="catalytic activity">
    <reaction>
        <text>nicotinate beta-D-ribonucleotide + CO2 + diphosphate = quinolinate + 5-phospho-alpha-D-ribose 1-diphosphate + 2 H(+)</text>
        <dbReference type="Rhea" id="RHEA:12733"/>
        <dbReference type="ChEBI" id="CHEBI:15378"/>
        <dbReference type="ChEBI" id="CHEBI:16526"/>
        <dbReference type="ChEBI" id="CHEBI:29959"/>
        <dbReference type="ChEBI" id="CHEBI:33019"/>
        <dbReference type="ChEBI" id="CHEBI:57502"/>
        <dbReference type="ChEBI" id="CHEBI:58017"/>
        <dbReference type="EC" id="2.4.2.19"/>
    </reaction>
</comment>
<comment type="pathway">
    <text>Cofactor biosynthesis; NAD(+) biosynthesis; nicotinate D-ribonucleotide from quinolinate: step 1/1.</text>
</comment>
<comment type="subunit">
    <text evidence="2">Hexamer formed by 3 homodimers.</text>
</comment>
<comment type="similarity">
    <text evidence="3">Belongs to the NadC/ModD family.</text>
</comment>
<accession>O25909</accession>
<proteinExistence type="evidence at protein level"/>
<protein>
    <recommendedName>
        <fullName>Probable nicotinate-nucleotide pyrophosphorylase [carboxylating]</fullName>
        <ecNumber>2.4.2.19</ecNumber>
    </recommendedName>
    <alternativeName>
        <fullName>Quinolinate phosphoribosyltransferase [decarboxylating]</fullName>
        <shortName>QAPRTase</shortName>
    </alternativeName>
</protein>
<sequence length="273" mass="30803">MEIRTFLERALKEDLGHGDLFERVLEKDFKATAFVRAKQEGVFSGEKYALELLEMTGIECVQTIKDKERFKPKDALMEIRGDFSMLLKVERTLLNLLQHSSGIATLTSRFVEALNSHKVRLLDTRKTRPLLRIFEKYSVLNGGASNHRLGLDDALMLKDTHLRHVKDLKSFLTHARKNLPFTAKIEIECESFEEAKNAMNAGADIVMCDNLSVLETKEIAAYRDAHYPFVLLEASGNISLESINAYAKSGVDAISVGALIHQATFIDMHMKMA</sequence>